<feature type="chain" id="PRO_1000189023" description="Cytochrome c-type biogenesis protein CcmE">
    <location>
        <begin position="1"/>
        <end position="160"/>
    </location>
</feature>
<feature type="topological domain" description="Cytoplasmic" evidence="1">
    <location>
        <begin position="1"/>
        <end position="8"/>
    </location>
</feature>
<feature type="transmembrane region" description="Helical; Signal-anchor for type II membrane protein" evidence="1">
    <location>
        <begin position="9"/>
        <end position="29"/>
    </location>
</feature>
<feature type="topological domain" description="Periplasmic" evidence="1">
    <location>
        <begin position="30"/>
        <end position="160"/>
    </location>
</feature>
<feature type="region of interest" description="Disordered" evidence="2">
    <location>
        <begin position="133"/>
        <end position="160"/>
    </location>
</feature>
<feature type="compositionally biased region" description="Basic and acidic residues" evidence="2">
    <location>
        <begin position="133"/>
        <end position="148"/>
    </location>
</feature>
<feature type="binding site" description="covalent" evidence="1">
    <location>
        <position position="130"/>
    </location>
    <ligand>
        <name>heme</name>
        <dbReference type="ChEBI" id="CHEBI:30413"/>
    </ligand>
</feature>
<feature type="binding site" description="axial binding residue" evidence="1">
    <location>
        <position position="134"/>
    </location>
    <ligand>
        <name>heme</name>
        <dbReference type="ChEBI" id="CHEBI:30413"/>
    </ligand>
    <ligandPart>
        <name>Fe</name>
        <dbReference type="ChEBI" id="CHEBI:18248"/>
    </ligandPart>
</feature>
<evidence type="ECO:0000255" key="1">
    <source>
        <dbReference type="HAMAP-Rule" id="MF_01959"/>
    </source>
</evidence>
<evidence type="ECO:0000256" key="2">
    <source>
        <dbReference type="SAM" id="MobiDB-lite"/>
    </source>
</evidence>
<reference key="1">
    <citation type="journal article" date="2008" name="Environ. Microbiol.">
        <title>The genome of Erwinia tasmaniensis strain Et1/99, a non-pathogenic bacterium in the genus Erwinia.</title>
        <authorList>
            <person name="Kube M."/>
            <person name="Migdoll A.M."/>
            <person name="Mueller I."/>
            <person name="Kuhl H."/>
            <person name="Beck A."/>
            <person name="Reinhardt R."/>
            <person name="Geider K."/>
        </authorList>
    </citation>
    <scope>NUCLEOTIDE SEQUENCE [LARGE SCALE GENOMIC DNA]</scope>
    <source>
        <strain>DSM 17950 / CFBP 7177 / CIP 109463 / NCPPB 4357 / Et1/99</strain>
    </source>
</reference>
<dbReference type="EMBL" id="CU468135">
    <property type="protein sequence ID" value="CAO96187.1"/>
    <property type="molecule type" value="Genomic_DNA"/>
</dbReference>
<dbReference type="RefSeq" id="WP_012440884.1">
    <property type="nucleotide sequence ID" value="NC_010694.1"/>
</dbReference>
<dbReference type="SMR" id="B2VJ02"/>
<dbReference type="STRING" id="465817.ETA_11410"/>
<dbReference type="KEGG" id="eta:ETA_11410"/>
<dbReference type="eggNOG" id="COG2332">
    <property type="taxonomic scope" value="Bacteria"/>
</dbReference>
<dbReference type="HOGENOM" id="CLU_079503_1_0_6"/>
<dbReference type="OrthoDB" id="9793584at2"/>
<dbReference type="Proteomes" id="UP000001726">
    <property type="component" value="Chromosome"/>
</dbReference>
<dbReference type="GO" id="GO:0005886">
    <property type="term" value="C:plasma membrane"/>
    <property type="evidence" value="ECO:0007669"/>
    <property type="project" value="UniProtKB-SubCell"/>
</dbReference>
<dbReference type="GO" id="GO:0020037">
    <property type="term" value="F:heme binding"/>
    <property type="evidence" value="ECO:0007669"/>
    <property type="project" value="InterPro"/>
</dbReference>
<dbReference type="GO" id="GO:0046872">
    <property type="term" value="F:metal ion binding"/>
    <property type="evidence" value="ECO:0007669"/>
    <property type="project" value="UniProtKB-KW"/>
</dbReference>
<dbReference type="GO" id="GO:0017004">
    <property type="term" value="P:cytochrome complex assembly"/>
    <property type="evidence" value="ECO:0007669"/>
    <property type="project" value="UniProtKB-KW"/>
</dbReference>
<dbReference type="FunFam" id="2.40.50.140:FF:000104">
    <property type="entry name" value="Cytochrome c-type biogenesis protein CcmE"/>
    <property type="match status" value="1"/>
</dbReference>
<dbReference type="Gene3D" id="2.40.50.140">
    <property type="entry name" value="Nucleic acid-binding proteins"/>
    <property type="match status" value="1"/>
</dbReference>
<dbReference type="HAMAP" id="MF_01959">
    <property type="entry name" value="CcmE"/>
    <property type="match status" value="1"/>
</dbReference>
<dbReference type="InterPro" id="IPR004329">
    <property type="entry name" value="CcmE"/>
</dbReference>
<dbReference type="InterPro" id="IPR036127">
    <property type="entry name" value="CcmE-like_sf"/>
</dbReference>
<dbReference type="InterPro" id="IPR012340">
    <property type="entry name" value="NA-bd_OB-fold"/>
</dbReference>
<dbReference type="NCBIfam" id="NF009638">
    <property type="entry name" value="PRK13165.1"/>
    <property type="match status" value="1"/>
</dbReference>
<dbReference type="NCBIfam" id="NF009727">
    <property type="entry name" value="PRK13254.1-1"/>
    <property type="match status" value="1"/>
</dbReference>
<dbReference type="NCBIfam" id="NF009729">
    <property type="entry name" value="PRK13254.1-3"/>
    <property type="match status" value="1"/>
</dbReference>
<dbReference type="NCBIfam" id="NF009731">
    <property type="entry name" value="PRK13254.1-5"/>
    <property type="match status" value="1"/>
</dbReference>
<dbReference type="PANTHER" id="PTHR34128">
    <property type="entry name" value="CYTOCHROME C-TYPE BIOGENESIS PROTEIN CCME HOMOLOG, MITOCHONDRIAL"/>
    <property type="match status" value="1"/>
</dbReference>
<dbReference type="PANTHER" id="PTHR34128:SF2">
    <property type="entry name" value="CYTOCHROME C-TYPE BIOGENESIS PROTEIN CCME HOMOLOG, MITOCHONDRIAL"/>
    <property type="match status" value="1"/>
</dbReference>
<dbReference type="Pfam" id="PF03100">
    <property type="entry name" value="CcmE"/>
    <property type="match status" value="1"/>
</dbReference>
<dbReference type="SUPFAM" id="SSF82093">
    <property type="entry name" value="Heme chaperone CcmE"/>
    <property type="match status" value="1"/>
</dbReference>
<proteinExistence type="inferred from homology"/>
<organism>
    <name type="scientific">Erwinia tasmaniensis (strain DSM 17950 / CFBP 7177 / CIP 109463 / NCPPB 4357 / Et1/99)</name>
    <dbReference type="NCBI Taxonomy" id="465817"/>
    <lineage>
        <taxon>Bacteria</taxon>
        <taxon>Pseudomonadati</taxon>
        <taxon>Pseudomonadota</taxon>
        <taxon>Gammaproteobacteria</taxon>
        <taxon>Enterobacterales</taxon>
        <taxon>Erwiniaceae</taxon>
        <taxon>Erwinia</taxon>
    </lineage>
</organism>
<name>CCME_ERWT9</name>
<keyword id="KW-0997">Cell inner membrane</keyword>
<keyword id="KW-1003">Cell membrane</keyword>
<keyword id="KW-0201">Cytochrome c-type biogenesis</keyword>
<keyword id="KW-0349">Heme</keyword>
<keyword id="KW-0408">Iron</keyword>
<keyword id="KW-0472">Membrane</keyword>
<keyword id="KW-0479">Metal-binding</keyword>
<keyword id="KW-1185">Reference proteome</keyword>
<keyword id="KW-0735">Signal-anchor</keyword>
<keyword id="KW-0812">Transmembrane</keyword>
<keyword id="KW-1133">Transmembrane helix</keyword>
<accession>B2VJ02</accession>
<protein>
    <recommendedName>
        <fullName evidence="1">Cytochrome c-type biogenesis protein CcmE</fullName>
    </recommendedName>
    <alternativeName>
        <fullName evidence="1">Cytochrome c maturation protein E</fullName>
    </alternativeName>
    <alternativeName>
        <fullName evidence="1">Heme chaperone CcmE</fullName>
    </alternativeName>
</protein>
<sequence length="160" mass="17523">MNPRRKNRLILVMLVLVGLGLATALVMYALRSNIDLFYTPSEMVNGKGEQQLKPEPGQRLRVGGMVMPGSVKRDPNTLRVAFKLYDASGVISVSYDGILPDLFREGQGVVAQGVLQDATHVIAKEVLAKHDEKYTPPEIEDAMKKDHPAQAVGDNSVRPS</sequence>
<gene>
    <name evidence="1" type="primary">ccmE</name>
    <name evidence="1" type="synonym">cycJ</name>
    <name type="ordered locus">ETA_11410</name>
</gene>
<comment type="function">
    <text evidence="1">Heme chaperone required for the biogenesis of c-type cytochromes. Transiently binds heme delivered by CcmC and transfers the heme to apo-cytochromes in a process facilitated by CcmF and CcmH.</text>
</comment>
<comment type="subcellular location">
    <subcellularLocation>
        <location evidence="1">Cell inner membrane</location>
        <topology evidence="1">Single-pass type II membrane protein</topology>
        <orientation evidence="1">Periplasmic side</orientation>
    </subcellularLocation>
</comment>
<comment type="similarity">
    <text evidence="1">Belongs to the CcmE/CycJ family.</text>
</comment>